<accession>C1B026</accession>
<dbReference type="EMBL" id="AP011115">
    <property type="protein sequence ID" value="BAH54447.1"/>
    <property type="molecule type" value="Genomic_DNA"/>
</dbReference>
<dbReference type="RefSeq" id="WP_005239657.1">
    <property type="nucleotide sequence ID" value="NC_012522.1"/>
</dbReference>
<dbReference type="SMR" id="C1B026"/>
<dbReference type="STRING" id="632772.ROP_62000"/>
<dbReference type="GeneID" id="69890530"/>
<dbReference type="KEGG" id="rop:ROP_62000"/>
<dbReference type="PATRIC" id="fig|632772.20.peg.6476"/>
<dbReference type="HOGENOM" id="CLU_098428_0_1_11"/>
<dbReference type="OrthoDB" id="9802617at2"/>
<dbReference type="Proteomes" id="UP000002212">
    <property type="component" value="Chromosome"/>
</dbReference>
<dbReference type="GO" id="GO:1990904">
    <property type="term" value="C:ribonucleoprotein complex"/>
    <property type="evidence" value="ECO:0007669"/>
    <property type="project" value="UniProtKB-KW"/>
</dbReference>
<dbReference type="GO" id="GO:0005840">
    <property type="term" value="C:ribosome"/>
    <property type="evidence" value="ECO:0007669"/>
    <property type="project" value="UniProtKB-KW"/>
</dbReference>
<dbReference type="GO" id="GO:0019843">
    <property type="term" value="F:rRNA binding"/>
    <property type="evidence" value="ECO:0007669"/>
    <property type="project" value="UniProtKB-UniRule"/>
</dbReference>
<dbReference type="GO" id="GO:0003735">
    <property type="term" value="F:structural constituent of ribosome"/>
    <property type="evidence" value="ECO:0007669"/>
    <property type="project" value="InterPro"/>
</dbReference>
<dbReference type="GO" id="GO:0006412">
    <property type="term" value="P:translation"/>
    <property type="evidence" value="ECO:0007669"/>
    <property type="project" value="UniProtKB-UniRule"/>
</dbReference>
<dbReference type="FunFam" id="3.30.1370.30:FF:000002">
    <property type="entry name" value="30S ribosomal protein S8"/>
    <property type="match status" value="1"/>
</dbReference>
<dbReference type="FunFam" id="3.30.1490.10:FF:000001">
    <property type="entry name" value="30S ribosomal protein S8"/>
    <property type="match status" value="1"/>
</dbReference>
<dbReference type="Gene3D" id="3.30.1370.30">
    <property type="match status" value="1"/>
</dbReference>
<dbReference type="Gene3D" id="3.30.1490.10">
    <property type="match status" value="1"/>
</dbReference>
<dbReference type="HAMAP" id="MF_01302_B">
    <property type="entry name" value="Ribosomal_uS8_B"/>
    <property type="match status" value="1"/>
</dbReference>
<dbReference type="InterPro" id="IPR000630">
    <property type="entry name" value="Ribosomal_uS8"/>
</dbReference>
<dbReference type="InterPro" id="IPR047863">
    <property type="entry name" value="Ribosomal_uS8_CS"/>
</dbReference>
<dbReference type="InterPro" id="IPR035987">
    <property type="entry name" value="Ribosomal_uS8_sf"/>
</dbReference>
<dbReference type="NCBIfam" id="NF001109">
    <property type="entry name" value="PRK00136.1"/>
    <property type="match status" value="1"/>
</dbReference>
<dbReference type="PANTHER" id="PTHR11758">
    <property type="entry name" value="40S RIBOSOMAL PROTEIN S15A"/>
    <property type="match status" value="1"/>
</dbReference>
<dbReference type="Pfam" id="PF00410">
    <property type="entry name" value="Ribosomal_S8"/>
    <property type="match status" value="1"/>
</dbReference>
<dbReference type="SUPFAM" id="SSF56047">
    <property type="entry name" value="Ribosomal protein S8"/>
    <property type="match status" value="1"/>
</dbReference>
<dbReference type="PROSITE" id="PS00053">
    <property type="entry name" value="RIBOSOMAL_S8"/>
    <property type="match status" value="1"/>
</dbReference>
<gene>
    <name evidence="1" type="primary">rpsH</name>
    <name type="ordered locus">ROP_62000</name>
</gene>
<organism>
    <name type="scientific">Rhodococcus opacus (strain B4)</name>
    <dbReference type="NCBI Taxonomy" id="632772"/>
    <lineage>
        <taxon>Bacteria</taxon>
        <taxon>Bacillati</taxon>
        <taxon>Actinomycetota</taxon>
        <taxon>Actinomycetes</taxon>
        <taxon>Mycobacteriales</taxon>
        <taxon>Nocardiaceae</taxon>
        <taxon>Rhodococcus</taxon>
    </lineage>
</organism>
<comment type="function">
    <text evidence="1">One of the primary rRNA binding proteins, it binds directly to 16S rRNA central domain where it helps coordinate assembly of the platform of the 30S subunit.</text>
</comment>
<comment type="subunit">
    <text evidence="1">Part of the 30S ribosomal subunit. Contacts proteins S5 and S12.</text>
</comment>
<comment type="similarity">
    <text evidence="1">Belongs to the universal ribosomal protein uS8 family.</text>
</comment>
<reference key="1">
    <citation type="submission" date="2009-03" db="EMBL/GenBank/DDBJ databases">
        <title>Comparison of the complete genome sequences of Rhodococcus erythropolis PR4 and Rhodococcus opacus B4.</title>
        <authorList>
            <person name="Takarada H."/>
            <person name="Sekine M."/>
            <person name="Hosoyama A."/>
            <person name="Yamada R."/>
            <person name="Fujisawa T."/>
            <person name="Omata S."/>
            <person name="Shimizu A."/>
            <person name="Tsukatani N."/>
            <person name="Tanikawa S."/>
            <person name="Fujita N."/>
            <person name="Harayama S."/>
        </authorList>
    </citation>
    <scope>NUCLEOTIDE SEQUENCE [LARGE SCALE GENOMIC DNA]</scope>
    <source>
        <strain>B4</strain>
    </source>
</reference>
<name>RS8_RHOOB</name>
<protein>
    <recommendedName>
        <fullName evidence="1">Small ribosomal subunit protein uS8</fullName>
    </recommendedName>
    <alternativeName>
        <fullName evidence="2">30S ribosomal protein S8</fullName>
    </alternativeName>
</protein>
<evidence type="ECO:0000255" key="1">
    <source>
        <dbReference type="HAMAP-Rule" id="MF_01302"/>
    </source>
</evidence>
<evidence type="ECO:0000305" key="2"/>
<proteinExistence type="inferred from homology"/>
<feature type="chain" id="PRO_1000165347" description="Small ribosomal subunit protein uS8">
    <location>
        <begin position="1"/>
        <end position="132"/>
    </location>
</feature>
<sequence>MTMTDPIADFLTRLRNANTAYHDEVKLPHSKIKANIAEILKREGYIADYRTEDAEVGKTLIVDLKYGPSRERSLAGVRRVSKPGLRVYAKSTNLPKVLGGLGVAIISTSTGLLTDRQAANQGVGGEVLAYVW</sequence>
<keyword id="KW-0687">Ribonucleoprotein</keyword>
<keyword id="KW-0689">Ribosomal protein</keyword>
<keyword id="KW-0694">RNA-binding</keyword>
<keyword id="KW-0699">rRNA-binding</keyword>